<organism>
    <name type="scientific">Aspergillus niger (strain ATCC MYA-4892 / CBS 513.88 / FGSC A1513)</name>
    <dbReference type="NCBI Taxonomy" id="425011"/>
    <lineage>
        <taxon>Eukaryota</taxon>
        <taxon>Fungi</taxon>
        <taxon>Dikarya</taxon>
        <taxon>Ascomycota</taxon>
        <taxon>Pezizomycotina</taxon>
        <taxon>Eurotiomycetes</taxon>
        <taxon>Eurotiomycetidae</taxon>
        <taxon>Eurotiales</taxon>
        <taxon>Aspergillaceae</taxon>
        <taxon>Aspergillus</taxon>
        <taxon>Aspergillus subgen. Circumdati</taxon>
    </lineage>
</organism>
<gene>
    <name type="primary">ino80</name>
    <name type="ORF">An17g01490</name>
</gene>
<feature type="chain" id="PRO_0000350955" description="Chromatin-remodeling ATPase INO80">
    <location>
        <begin position="1"/>
        <end position="1697"/>
    </location>
</feature>
<feature type="domain" description="DBINO" evidence="6">
    <location>
        <begin position="581"/>
        <end position="706"/>
    </location>
</feature>
<feature type="domain" description="Helicase ATP-binding" evidence="4">
    <location>
        <begin position="835"/>
        <end position="1007"/>
    </location>
</feature>
<feature type="domain" description="Helicase C-terminal" evidence="5">
    <location>
        <begin position="1410"/>
        <end position="1570"/>
    </location>
</feature>
<feature type="region of interest" description="Disordered" evidence="7">
    <location>
        <begin position="1"/>
        <end position="324"/>
    </location>
</feature>
<feature type="region of interest" description="Disordered" evidence="7">
    <location>
        <begin position="398"/>
        <end position="569"/>
    </location>
</feature>
<feature type="region of interest" description="Disordered" evidence="7">
    <location>
        <begin position="615"/>
        <end position="637"/>
    </location>
</feature>
<feature type="region of interest" description="Disordered" evidence="7">
    <location>
        <begin position="1626"/>
        <end position="1697"/>
    </location>
</feature>
<feature type="coiled-coil region" evidence="3">
    <location>
        <begin position="383"/>
        <end position="466"/>
    </location>
</feature>
<feature type="coiled-coil region" evidence="3">
    <location>
        <begin position="623"/>
        <end position="694"/>
    </location>
</feature>
<feature type="short sequence motif" description="DEAQ box">
    <location>
        <begin position="958"/>
        <end position="961"/>
    </location>
</feature>
<feature type="compositionally biased region" description="Polar residues" evidence="7">
    <location>
        <begin position="33"/>
        <end position="53"/>
    </location>
</feature>
<feature type="compositionally biased region" description="Polar residues" evidence="7">
    <location>
        <begin position="85"/>
        <end position="94"/>
    </location>
</feature>
<feature type="compositionally biased region" description="Polar residues" evidence="7">
    <location>
        <begin position="108"/>
        <end position="122"/>
    </location>
</feature>
<feature type="compositionally biased region" description="Basic and acidic residues" evidence="7">
    <location>
        <begin position="128"/>
        <end position="143"/>
    </location>
</feature>
<feature type="compositionally biased region" description="Low complexity" evidence="7">
    <location>
        <begin position="202"/>
        <end position="221"/>
    </location>
</feature>
<feature type="compositionally biased region" description="Basic and acidic residues" evidence="7">
    <location>
        <begin position="248"/>
        <end position="271"/>
    </location>
</feature>
<feature type="compositionally biased region" description="Polar residues" evidence="7">
    <location>
        <begin position="272"/>
        <end position="288"/>
    </location>
</feature>
<feature type="compositionally biased region" description="Basic and acidic residues" evidence="7">
    <location>
        <begin position="414"/>
        <end position="451"/>
    </location>
</feature>
<feature type="compositionally biased region" description="Basic and acidic residues" evidence="7">
    <location>
        <begin position="512"/>
        <end position="523"/>
    </location>
</feature>
<feature type="compositionally biased region" description="Basic and acidic residues" evidence="7">
    <location>
        <begin position="540"/>
        <end position="560"/>
    </location>
</feature>
<feature type="compositionally biased region" description="Basic and acidic residues" evidence="7">
    <location>
        <begin position="621"/>
        <end position="635"/>
    </location>
</feature>
<feature type="compositionally biased region" description="Polar residues" evidence="7">
    <location>
        <begin position="1646"/>
        <end position="1658"/>
    </location>
</feature>
<feature type="compositionally biased region" description="Basic residues" evidence="7">
    <location>
        <begin position="1663"/>
        <end position="1679"/>
    </location>
</feature>
<feature type="compositionally biased region" description="Basic and acidic residues" evidence="7">
    <location>
        <begin position="1680"/>
        <end position="1689"/>
    </location>
</feature>
<feature type="binding site" evidence="4">
    <location>
        <begin position="848"/>
        <end position="855"/>
    </location>
    <ligand>
        <name>ATP</name>
        <dbReference type="ChEBI" id="CHEBI:30616"/>
    </ligand>
</feature>
<evidence type="ECO:0000250" key="1">
    <source>
        <dbReference type="UniProtKB" id="P53115"/>
    </source>
</evidence>
<evidence type="ECO:0000250" key="2">
    <source>
        <dbReference type="UniProtKB" id="Q9ULG1"/>
    </source>
</evidence>
<evidence type="ECO:0000255" key="3"/>
<evidence type="ECO:0000255" key="4">
    <source>
        <dbReference type="PROSITE-ProRule" id="PRU00541"/>
    </source>
</evidence>
<evidence type="ECO:0000255" key="5">
    <source>
        <dbReference type="PROSITE-ProRule" id="PRU00542"/>
    </source>
</evidence>
<evidence type="ECO:0000255" key="6">
    <source>
        <dbReference type="PROSITE-ProRule" id="PRU00746"/>
    </source>
</evidence>
<evidence type="ECO:0000256" key="7">
    <source>
        <dbReference type="SAM" id="MobiDB-lite"/>
    </source>
</evidence>
<evidence type="ECO:0000305" key="8"/>
<dbReference type="EC" id="3.6.4.-" evidence="1"/>
<dbReference type="EMBL" id="AM270389">
    <property type="protein sequence ID" value="CAK43045.1"/>
    <property type="molecule type" value="Genomic_DNA"/>
</dbReference>
<dbReference type="RefSeq" id="XP_001398378.1">
    <property type="nucleotide sequence ID" value="XM_001398341.1"/>
</dbReference>
<dbReference type="SMR" id="A2R9H9"/>
<dbReference type="EnsemblFungi" id="CAK43045">
    <property type="protein sequence ID" value="CAK43045"/>
    <property type="gene ID" value="An17g01490"/>
</dbReference>
<dbReference type="GeneID" id="4989472"/>
<dbReference type="KEGG" id="ang:An17g01490"/>
<dbReference type="VEuPathDB" id="FungiDB:An17g01490"/>
<dbReference type="HOGENOM" id="CLU_000315_26_1_1"/>
<dbReference type="Proteomes" id="UP000006706">
    <property type="component" value="Chromosome 5L"/>
</dbReference>
<dbReference type="GO" id="GO:0000775">
    <property type="term" value="C:chromosome, centromeric region"/>
    <property type="evidence" value="ECO:0007669"/>
    <property type="project" value="EnsemblFungi"/>
</dbReference>
<dbReference type="GO" id="GO:0000781">
    <property type="term" value="C:chromosome, telomeric region"/>
    <property type="evidence" value="ECO:0007669"/>
    <property type="project" value="GOC"/>
</dbReference>
<dbReference type="GO" id="GO:0031011">
    <property type="term" value="C:Ino80 complex"/>
    <property type="evidence" value="ECO:0007669"/>
    <property type="project" value="EnsemblFungi"/>
</dbReference>
<dbReference type="GO" id="GO:0005524">
    <property type="term" value="F:ATP binding"/>
    <property type="evidence" value="ECO:0007669"/>
    <property type="project" value="UniProtKB-KW"/>
</dbReference>
<dbReference type="GO" id="GO:0016887">
    <property type="term" value="F:ATP hydrolysis activity"/>
    <property type="evidence" value="ECO:0007669"/>
    <property type="project" value="EnsemblFungi"/>
</dbReference>
<dbReference type="GO" id="GO:0140658">
    <property type="term" value="F:ATP-dependent chromatin remodeler activity"/>
    <property type="evidence" value="ECO:0007669"/>
    <property type="project" value="InterPro"/>
</dbReference>
<dbReference type="GO" id="GO:0003677">
    <property type="term" value="F:DNA binding"/>
    <property type="evidence" value="ECO:0007669"/>
    <property type="project" value="UniProtKB-KW"/>
</dbReference>
<dbReference type="GO" id="GO:0042393">
    <property type="term" value="F:histone binding"/>
    <property type="evidence" value="ECO:0007669"/>
    <property type="project" value="TreeGrafter"/>
</dbReference>
<dbReference type="GO" id="GO:0034080">
    <property type="term" value="P:CENP-A containing chromatin assembly"/>
    <property type="evidence" value="ECO:0007669"/>
    <property type="project" value="EnsemblFungi"/>
</dbReference>
<dbReference type="GO" id="GO:0006281">
    <property type="term" value="P:DNA repair"/>
    <property type="evidence" value="ECO:0007669"/>
    <property type="project" value="UniProtKB-KW"/>
</dbReference>
<dbReference type="GO" id="GO:0045944">
    <property type="term" value="P:positive regulation of transcription by RNA polymerase II"/>
    <property type="evidence" value="ECO:0007669"/>
    <property type="project" value="EnsemblFungi"/>
</dbReference>
<dbReference type="GO" id="GO:0032006">
    <property type="term" value="P:regulation of TOR signaling"/>
    <property type="evidence" value="ECO:0007669"/>
    <property type="project" value="EnsemblFungi"/>
</dbReference>
<dbReference type="GO" id="GO:0031509">
    <property type="term" value="P:subtelomeric heterochromatin formation"/>
    <property type="evidence" value="ECO:0007669"/>
    <property type="project" value="EnsemblFungi"/>
</dbReference>
<dbReference type="GO" id="GO:0000722">
    <property type="term" value="P:telomere maintenance via recombination"/>
    <property type="evidence" value="ECO:0007669"/>
    <property type="project" value="EnsemblFungi"/>
</dbReference>
<dbReference type="GO" id="GO:0006366">
    <property type="term" value="P:transcription by RNA polymerase II"/>
    <property type="evidence" value="ECO:0007669"/>
    <property type="project" value="EnsemblFungi"/>
</dbReference>
<dbReference type="CDD" id="cd18002">
    <property type="entry name" value="DEXQc_INO80"/>
    <property type="match status" value="1"/>
</dbReference>
<dbReference type="CDD" id="cd18793">
    <property type="entry name" value="SF2_C_SNF"/>
    <property type="match status" value="1"/>
</dbReference>
<dbReference type="FunFam" id="3.40.50.10810:FF:000006">
    <property type="entry name" value="Putative DNA helicase INO80"/>
    <property type="match status" value="1"/>
</dbReference>
<dbReference type="FunFam" id="3.40.50.300:FF:001269">
    <property type="entry name" value="SNF2 family helicase/ATPase"/>
    <property type="match status" value="1"/>
</dbReference>
<dbReference type="Gene3D" id="3.40.50.300">
    <property type="entry name" value="P-loop containing nucleotide triphosphate hydrolases"/>
    <property type="match status" value="1"/>
</dbReference>
<dbReference type="Gene3D" id="3.40.50.10810">
    <property type="entry name" value="Tandem AAA-ATPase domain"/>
    <property type="match status" value="1"/>
</dbReference>
<dbReference type="InterPro" id="IPR020838">
    <property type="entry name" value="DBINO"/>
</dbReference>
<dbReference type="InterPro" id="IPR031047">
    <property type="entry name" value="DEXQc_INO80"/>
</dbReference>
<dbReference type="InterPro" id="IPR014001">
    <property type="entry name" value="Helicase_ATP-bd"/>
</dbReference>
<dbReference type="InterPro" id="IPR001650">
    <property type="entry name" value="Helicase_C-like"/>
</dbReference>
<dbReference type="InterPro" id="IPR050520">
    <property type="entry name" value="INO80/SWR1_helicase"/>
</dbReference>
<dbReference type="InterPro" id="IPR027417">
    <property type="entry name" value="P-loop_NTPase"/>
</dbReference>
<dbReference type="InterPro" id="IPR038718">
    <property type="entry name" value="SNF2-like_sf"/>
</dbReference>
<dbReference type="InterPro" id="IPR049730">
    <property type="entry name" value="SNF2/RAD54-like_C"/>
</dbReference>
<dbReference type="InterPro" id="IPR000330">
    <property type="entry name" value="SNF2_N"/>
</dbReference>
<dbReference type="PANTHER" id="PTHR45685:SF2">
    <property type="entry name" value="CHROMATIN-REMODELING ATPASE INO80"/>
    <property type="match status" value="1"/>
</dbReference>
<dbReference type="PANTHER" id="PTHR45685">
    <property type="entry name" value="HELICASE SRCAP-RELATED"/>
    <property type="match status" value="1"/>
</dbReference>
<dbReference type="Pfam" id="PF13892">
    <property type="entry name" value="DBINO"/>
    <property type="match status" value="1"/>
</dbReference>
<dbReference type="Pfam" id="PF00271">
    <property type="entry name" value="Helicase_C"/>
    <property type="match status" value="1"/>
</dbReference>
<dbReference type="Pfam" id="PF00176">
    <property type="entry name" value="SNF2-rel_dom"/>
    <property type="match status" value="1"/>
</dbReference>
<dbReference type="SMART" id="SM00487">
    <property type="entry name" value="DEXDc"/>
    <property type="match status" value="1"/>
</dbReference>
<dbReference type="SMART" id="SM00490">
    <property type="entry name" value="HELICc"/>
    <property type="match status" value="1"/>
</dbReference>
<dbReference type="SUPFAM" id="SSF52540">
    <property type="entry name" value="P-loop containing nucleoside triphosphate hydrolases"/>
    <property type="match status" value="2"/>
</dbReference>
<dbReference type="PROSITE" id="PS51413">
    <property type="entry name" value="DBINO"/>
    <property type="match status" value="1"/>
</dbReference>
<dbReference type="PROSITE" id="PS51192">
    <property type="entry name" value="HELICASE_ATP_BIND_1"/>
    <property type="match status" value="1"/>
</dbReference>
<dbReference type="PROSITE" id="PS51194">
    <property type="entry name" value="HELICASE_CTER"/>
    <property type="match status" value="1"/>
</dbReference>
<sequence>MTGAPPYNPQSPTQQSRYPVYSPPAKSRPYYANNEQYQQHPPQTPPAFSSRSPHFSHAPSPLPGTLPPLNGAAPPSSHPSEPPSQYQAHSSAGNPQFALPRPYPGSVLSGNGASPYGHSTPSHAHPAGRPDSHPQTSPKKESESQFPMSTHGVMGYPSSVVREPRASSPPKDVKPTRAADPMSFASILSGPTEERAPPPRQSSAEATPTPLAPAATAQTSLSPPPVASAATSQKSKDRAPALTASLPRLEKKPTTEKRRRNPPETEQKTADSRTSNVANGVSEPSKTLAQPRGAGSRPVMSERETEALNKALADMAEADKSDVEAPGYDRFREEYRAKGKKRAFATEQAEILRRKRRRNDFLVKLSKSLEKQATAGMDRFRYANEASVVAEVQAKEIQDEKERKKDMQRKRRRENTVRMEMQKKKEAEAKAHEAQDSAEKAKFLREAERAQRKIKTTKRALEGITAPEEISEVTPLAPNLEGGTTSSFHIGRGSPSRRKSGRGGPVTRPKKSKEQKQAEKDAAEAAYAAMENDEPLPIAPKEDPRKESLKKEVKGGRSKEPTPTPLSAYETKGYNQIYEQIWRDIARKDIPKVYRIKALSLSTRQENLRKTAQLASKQSRKWQERTNKSMKDTQARAKRTMREMMSFWKRNEREERDLRRLAEKQEIESAKKAEAEREANRQRRKLNFLISQTELYSHFIGRKIKGAEGDAAGDTAVEATGETVQPGKGQDHTIDMPSSVADAGTKVTNFEDLDFDAEDETALRQAAMANAQNAVQEAQDRARAFNSGQNQMDALDEGELNFQNPTSLGDIEISQPNMLTAKLKEYQLKGLNWLVNLYEQGINGILADEMGLGKTIQSISVMAYLAEVHNIWGPFLVIAPASTLHNWQQEITKFVPDIKVLPYWGSAKDRKILRKFWDRKHITYTKESEFHVLVTSYQLVVLDAQYFQKVKWQYMILDEAQAIKSSQSSRWKNLLGFHCRNRLLLTGTPIQNNMQELWALLHFIMPTLFDSHDEFSEWFSKDIESHAQSNTKLNEDQLRRLHMILKPFMLRRVKKHVQQELGDKVEKDIFCDLTYRQRAYYTNLRNRVSIMDLIEKAAVGDEADSTTLMNLVMQFRKVCNHPDLFERAETKSPFSTAYFAETASFVREGNNVDVRYSTRNLIEYPMPRLLCGAGGRVDVAGAENPHAGFRGRYLNHLMNIFTPENMKQSIQDDGAFSFLRFVDTSLGEAYEQSHLGIFERAVRRRGQVNRLSRLNVAYDDDKELAGSALPHTLFNIVDRNDKHAVNEVAAEGIMRDLMTVSQSTYEREGLNIIEPCVSPAASAPPISVVSSSHIPSIETRDTLFNVSVRHALYSTPSRQVDEQIIEKKVDPTPYSLAPMLPKPISAKGRYTHIEVPSMRRFVTDSGKLAKLDELLRELKAGGHRVLLYFQMTRMIDLMEEYLTYRNYKYCRLDGSTKLEDRRDTVADFQQRPEIFVFLLSTRAGGLGINLTAADTVIFYDSDWNPTIDSQAMDRAHRLGQTRQVTVYRLITRGTIEERIRKRALQKEEVQRVVITGGAAGGVDFNTRNRESRTKDIAMWLADDEQAELIEQKEKEALDRGEVFGAGKGGKKAAQKRKKDITLDDMYHEGEGNFDDASAKPSGAATPVSTAENVGTPSSTPAPKRGRGRGSGKGTSKRAKTTKERLRLIDGDGGLGPS</sequence>
<keyword id="KW-0010">Activator</keyword>
<keyword id="KW-0067">ATP-binding</keyword>
<keyword id="KW-0175">Coiled coil</keyword>
<keyword id="KW-0227">DNA damage</keyword>
<keyword id="KW-0234">DNA repair</keyword>
<keyword id="KW-0238">DNA-binding</keyword>
<keyword id="KW-0378">Hydrolase</keyword>
<keyword id="KW-0547">Nucleotide-binding</keyword>
<keyword id="KW-0539">Nucleus</keyword>
<keyword id="KW-1185">Reference proteome</keyword>
<keyword id="KW-0804">Transcription</keyword>
<keyword id="KW-0805">Transcription regulation</keyword>
<name>INO80_ASPNC</name>
<comment type="function">
    <text evidence="6">ATPase component of the INO80 complex which remodels chromatin by shifting nucleosomes and is involved in DNA repair.</text>
</comment>
<comment type="catalytic activity">
    <reaction evidence="1">
        <text>ATP + H2O = ADP + phosphate + H(+)</text>
        <dbReference type="Rhea" id="RHEA:13065"/>
        <dbReference type="ChEBI" id="CHEBI:15377"/>
        <dbReference type="ChEBI" id="CHEBI:15378"/>
        <dbReference type="ChEBI" id="CHEBI:30616"/>
        <dbReference type="ChEBI" id="CHEBI:43474"/>
        <dbReference type="ChEBI" id="CHEBI:456216"/>
    </reaction>
</comment>
<comment type="subunit">
    <text evidence="6">Component of the INO80 chromatin-remodeling complex.</text>
</comment>
<comment type="subcellular location">
    <subcellularLocation>
        <location evidence="6">Nucleus</location>
    </subcellularLocation>
</comment>
<comment type="domain">
    <text evidence="2">The DBINO region is involved in binding to DNA.</text>
</comment>
<comment type="similarity">
    <text evidence="8">Belongs to the SNF2/RAD54 helicase family.</text>
</comment>
<accession>A2R9H9</accession>
<reference key="1">
    <citation type="journal article" date="2007" name="Nat. Biotechnol.">
        <title>Genome sequencing and analysis of the versatile cell factory Aspergillus niger CBS 513.88.</title>
        <authorList>
            <person name="Pel H.J."/>
            <person name="de Winde J.H."/>
            <person name="Archer D.B."/>
            <person name="Dyer P.S."/>
            <person name="Hofmann G."/>
            <person name="Schaap P.J."/>
            <person name="Turner G."/>
            <person name="de Vries R.P."/>
            <person name="Albang R."/>
            <person name="Albermann K."/>
            <person name="Andersen M.R."/>
            <person name="Bendtsen J.D."/>
            <person name="Benen J.A.E."/>
            <person name="van den Berg M."/>
            <person name="Breestraat S."/>
            <person name="Caddick M.X."/>
            <person name="Contreras R."/>
            <person name="Cornell M."/>
            <person name="Coutinho P.M."/>
            <person name="Danchin E.G.J."/>
            <person name="Debets A.J.M."/>
            <person name="Dekker P."/>
            <person name="van Dijck P.W.M."/>
            <person name="van Dijk A."/>
            <person name="Dijkhuizen L."/>
            <person name="Driessen A.J.M."/>
            <person name="d'Enfert C."/>
            <person name="Geysens S."/>
            <person name="Goosen C."/>
            <person name="Groot G.S.P."/>
            <person name="de Groot P.W.J."/>
            <person name="Guillemette T."/>
            <person name="Henrissat B."/>
            <person name="Herweijer M."/>
            <person name="van den Hombergh J.P.T.W."/>
            <person name="van den Hondel C.A.M.J.J."/>
            <person name="van der Heijden R.T.J.M."/>
            <person name="van der Kaaij R.M."/>
            <person name="Klis F.M."/>
            <person name="Kools H.J."/>
            <person name="Kubicek C.P."/>
            <person name="van Kuyk P.A."/>
            <person name="Lauber J."/>
            <person name="Lu X."/>
            <person name="van der Maarel M.J.E.C."/>
            <person name="Meulenberg R."/>
            <person name="Menke H."/>
            <person name="Mortimer M.A."/>
            <person name="Nielsen J."/>
            <person name="Oliver S.G."/>
            <person name="Olsthoorn M."/>
            <person name="Pal K."/>
            <person name="van Peij N.N.M.E."/>
            <person name="Ram A.F.J."/>
            <person name="Rinas U."/>
            <person name="Roubos J.A."/>
            <person name="Sagt C.M.J."/>
            <person name="Schmoll M."/>
            <person name="Sun J."/>
            <person name="Ussery D."/>
            <person name="Varga J."/>
            <person name="Vervecken W."/>
            <person name="van de Vondervoort P.J.J."/>
            <person name="Wedler H."/>
            <person name="Woesten H.A.B."/>
            <person name="Zeng A.-P."/>
            <person name="van Ooyen A.J.J."/>
            <person name="Visser J."/>
            <person name="Stam H."/>
        </authorList>
    </citation>
    <scope>NUCLEOTIDE SEQUENCE [LARGE SCALE GENOMIC DNA]</scope>
    <source>
        <strain>ATCC MYA-4892 / CBS 513.88 / FGSC A1513</strain>
    </source>
</reference>
<protein>
    <recommendedName>
        <fullName evidence="1">Chromatin-remodeling ATPase INO80</fullName>
        <ecNumber evidence="1">3.6.4.-</ecNumber>
    </recommendedName>
</protein>
<proteinExistence type="inferred from homology"/>